<proteinExistence type="inferred from homology"/>
<reference key="1">
    <citation type="submission" date="2006-03" db="EMBL/GenBank/DDBJ databases">
        <title>Complete genome sequence of Gemmatimonas aurantiaca T-27 that represents a novel phylum Gemmatimonadetes.</title>
        <authorList>
            <person name="Takasaki K."/>
            <person name="Ichikawa N."/>
            <person name="Miura H."/>
            <person name="Matsushita S."/>
            <person name="Watanabe Y."/>
            <person name="Oguchi A."/>
            <person name="Ankai A."/>
            <person name="Yashiro I."/>
            <person name="Takahashi M."/>
            <person name="Terui Y."/>
            <person name="Fukui S."/>
            <person name="Yokoyama H."/>
            <person name="Tanikawa S."/>
            <person name="Hanada S."/>
            <person name="Kamagata Y."/>
            <person name="Fujita N."/>
        </authorList>
    </citation>
    <scope>NUCLEOTIDE SEQUENCE [LARGE SCALE GENOMIC DNA]</scope>
    <source>
        <strain>DSM 14586 / JCM 11422 / NBRC 100505 / T-27</strain>
    </source>
</reference>
<feature type="chain" id="PRO_1000212130" description="Argininosuccinate synthase">
    <location>
        <begin position="1"/>
        <end position="445"/>
    </location>
</feature>
<feature type="binding site" evidence="1">
    <location>
        <begin position="17"/>
        <end position="25"/>
    </location>
    <ligand>
        <name>ATP</name>
        <dbReference type="ChEBI" id="CHEBI:30616"/>
    </ligand>
</feature>
<feature type="binding site" evidence="1">
    <location>
        <position position="43"/>
    </location>
    <ligand>
        <name>ATP</name>
        <dbReference type="ChEBI" id="CHEBI:30616"/>
    </ligand>
</feature>
<feature type="binding site" evidence="1">
    <location>
        <position position="99"/>
    </location>
    <ligand>
        <name>L-citrulline</name>
        <dbReference type="ChEBI" id="CHEBI:57743"/>
    </ligand>
</feature>
<feature type="binding site" evidence="1">
    <location>
        <position position="129"/>
    </location>
    <ligand>
        <name>ATP</name>
        <dbReference type="ChEBI" id="CHEBI:30616"/>
    </ligand>
</feature>
<feature type="binding site" evidence="1">
    <location>
        <position position="131"/>
    </location>
    <ligand>
        <name>ATP</name>
        <dbReference type="ChEBI" id="CHEBI:30616"/>
    </ligand>
</feature>
<feature type="binding site" evidence="1">
    <location>
        <position position="131"/>
    </location>
    <ligand>
        <name>L-aspartate</name>
        <dbReference type="ChEBI" id="CHEBI:29991"/>
    </ligand>
</feature>
<feature type="binding site" evidence="1">
    <location>
        <position position="135"/>
    </location>
    <ligand>
        <name>L-aspartate</name>
        <dbReference type="ChEBI" id="CHEBI:29991"/>
    </ligand>
</feature>
<feature type="binding site" evidence="1">
    <location>
        <position position="135"/>
    </location>
    <ligand>
        <name>L-citrulline</name>
        <dbReference type="ChEBI" id="CHEBI:57743"/>
    </ligand>
</feature>
<feature type="binding site" evidence="1">
    <location>
        <position position="136"/>
    </location>
    <ligand>
        <name>ATP</name>
        <dbReference type="ChEBI" id="CHEBI:30616"/>
    </ligand>
</feature>
<feature type="binding site" evidence="1">
    <location>
        <position position="136"/>
    </location>
    <ligand>
        <name>L-aspartate</name>
        <dbReference type="ChEBI" id="CHEBI:29991"/>
    </ligand>
</feature>
<feature type="binding site" evidence="1">
    <location>
        <position position="139"/>
    </location>
    <ligand>
        <name>L-citrulline</name>
        <dbReference type="ChEBI" id="CHEBI:57743"/>
    </ligand>
</feature>
<feature type="binding site" evidence="1">
    <location>
        <position position="192"/>
    </location>
    <ligand>
        <name>L-citrulline</name>
        <dbReference type="ChEBI" id="CHEBI:57743"/>
    </ligand>
</feature>
<feature type="binding site" evidence="1">
    <location>
        <position position="194"/>
    </location>
    <ligand>
        <name>ATP</name>
        <dbReference type="ChEBI" id="CHEBI:30616"/>
    </ligand>
</feature>
<feature type="binding site" evidence="1">
    <location>
        <position position="201"/>
    </location>
    <ligand>
        <name>L-citrulline</name>
        <dbReference type="ChEBI" id="CHEBI:57743"/>
    </ligand>
</feature>
<feature type="binding site" evidence="1">
    <location>
        <position position="203"/>
    </location>
    <ligand>
        <name>L-citrulline</name>
        <dbReference type="ChEBI" id="CHEBI:57743"/>
    </ligand>
</feature>
<feature type="binding site" evidence="1">
    <location>
        <position position="280"/>
    </location>
    <ligand>
        <name>L-citrulline</name>
        <dbReference type="ChEBI" id="CHEBI:57743"/>
    </ligand>
</feature>
<organism>
    <name type="scientific">Gemmatimonas aurantiaca (strain DSM 14586 / JCM 11422 / NBRC 100505 / T-27)</name>
    <dbReference type="NCBI Taxonomy" id="379066"/>
    <lineage>
        <taxon>Bacteria</taxon>
        <taxon>Pseudomonadati</taxon>
        <taxon>Gemmatimonadota</taxon>
        <taxon>Gemmatimonadia</taxon>
        <taxon>Gemmatimonadales</taxon>
        <taxon>Gemmatimonadaceae</taxon>
        <taxon>Gemmatimonas</taxon>
    </lineage>
</organism>
<keyword id="KW-0028">Amino-acid biosynthesis</keyword>
<keyword id="KW-0055">Arginine biosynthesis</keyword>
<keyword id="KW-0067">ATP-binding</keyword>
<keyword id="KW-0963">Cytoplasm</keyword>
<keyword id="KW-0436">Ligase</keyword>
<keyword id="KW-0547">Nucleotide-binding</keyword>
<keyword id="KW-1185">Reference proteome</keyword>
<evidence type="ECO:0000255" key="1">
    <source>
        <dbReference type="HAMAP-Rule" id="MF_00581"/>
    </source>
</evidence>
<comment type="catalytic activity">
    <reaction evidence="1">
        <text>L-citrulline + L-aspartate + ATP = 2-(N(omega)-L-arginino)succinate + AMP + diphosphate + H(+)</text>
        <dbReference type="Rhea" id="RHEA:10932"/>
        <dbReference type="ChEBI" id="CHEBI:15378"/>
        <dbReference type="ChEBI" id="CHEBI:29991"/>
        <dbReference type="ChEBI" id="CHEBI:30616"/>
        <dbReference type="ChEBI" id="CHEBI:33019"/>
        <dbReference type="ChEBI" id="CHEBI:57472"/>
        <dbReference type="ChEBI" id="CHEBI:57743"/>
        <dbReference type="ChEBI" id="CHEBI:456215"/>
        <dbReference type="EC" id="6.3.4.5"/>
    </reaction>
</comment>
<comment type="pathway">
    <text evidence="1">Amino-acid biosynthesis; L-arginine biosynthesis; L-arginine from L-ornithine and carbamoyl phosphate: step 2/3.</text>
</comment>
<comment type="subunit">
    <text evidence="1">Homotetramer.</text>
</comment>
<comment type="subcellular location">
    <subcellularLocation>
        <location evidence="1">Cytoplasm</location>
    </subcellularLocation>
</comment>
<comment type="similarity">
    <text evidence="1">Belongs to the argininosuccinate synthase family. Type 2 subfamily.</text>
</comment>
<sequence>MANILQRLPIGEKVGIAFSGGLDTSAALHWMRAKGAVPYAYTANLGQPDESDYEEIPRKAMAYGAEKARLVECRSQLVAEGLAALQCGAFHVSTAGQTYFNTTPLGRAVTGTMLVAAMREDDVNIWGDGSTFKGNDIERFYRYGLLTNPNLRVYKPWLDQQFIDELGGRTEMAEYLIASGFEYKMSVEKAYSTDSNILGATHEAKDLEFLNKGMHIVHPIMGVAFWRDEVKIEKETVTIRFEEGYPVSINGREFGSALELFTEANVIGGRHGLGMSDQIENRIIEAKSRGIYEAPGLALLFIAYERLVTGIHNEDTIEQYRINGKKLGRLLYQGRWLDPQSLMLRESAQRWVAKAVTGEVTVELRRGNDYSIMDTSSANLTYKPERLTMEKGQEYFSPLDRIGQLTMRNLDIIDTRDKLSIYVSAGLLRGSSTTGVPQLPSGSDE</sequence>
<gene>
    <name evidence="1" type="primary">argG</name>
    <name type="ordered locus">GAU_0110</name>
</gene>
<dbReference type="EC" id="6.3.4.5" evidence="1"/>
<dbReference type="EMBL" id="AP009153">
    <property type="protein sequence ID" value="BAH37152.1"/>
    <property type="molecule type" value="Genomic_DNA"/>
</dbReference>
<dbReference type="RefSeq" id="WP_012681600.1">
    <property type="nucleotide sequence ID" value="NC_012489.1"/>
</dbReference>
<dbReference type="SMR" id="C1A3S5"/>
<dbReference type="STRING" id="379066.GAU_0110"/>
<dbReference type="KEGG" id="gau:GAU_0110"/>
<dbReference type="eggNOG" id="COG0137">
    <property type="taxonomic scope" value="Bacteria"/>
</dbReference>
<dbReference type="HOGENOM" id="CLU_032784_4_1_0"/>
<dbReference type="OrthoDB" id="9801641at2"/>
<dbReference type="UniPathway" id="UPA00068">
    <property type="reaction ID" value="UER00113"/>
</dbReference>
<dbReference type="Proteomes" id="UP000002209">
    <property type="component" value="Chromosome"/>
</dbReference>
<dbReference type="GO" id="GO:0005737">
    <property type="term" value="C:cytoplasm"/>
    <property type="evidence" value="ECO:0007669"/>
    <property type="project" value="UniProtKB-SubCell"/>
</dbReference>
<dbReference type="GO" id="GO:0004055">
    <property type="term" value="F:argininosuccinate synthase activity"/>
    <property type="evidence" value="ECO:0007669"/>
    <property type="project" value="UniProtKB-UniRule"/>
</dbReference>
<dbReference type="GO" id="GO:0005524">
    <property type="term" value="F:ATP binding"/>
    <property type="evidence" value="ECO:0007669"/>
    <property type="project" value="UniProtKB-UniRule"/>
</dbReference>
<dbReference type="GO" id="GO:0042803">
    <property type="term" value="F:protein homodimerization activity"/>
    <property type="evidence" value="ECO:0007669"/>
    <property type="project" value="InterPro"/>
</dbReference>
<dbReference type="GO" id="GO:0000053">
    <property type="term" value="P:argininosuccinate metabolic process"/>
    <property type="evidence" value="ECO:0007669"/>
    <property type="project" value="TreeGrafter"/>
</dbReference>
<dbReference type="GO" id="GO:0006526">
    <property type="term" value="P:L-arginine biosynthetic process"/>
    <property type="evidence" value="ECO:0007669"/>
    <property type="project" value="UniProtKB-UniRule"/>
</dbReference>
<dbReference type="GO" id="GO:0000050">
    <property type="term" value="P:urea cycle"/>
    <property type="evidence" value="ECO:0007669"/>
    <property type="project" value="TreeGrafter"/>
</dbReference>
<dbReference type="CDD" id="cd01999">
    <property type="entry name" value="ASS"/>
    <property type="match status" value="1"/>
</dbReference>
<dbReference type="FunFam" id="1.10.287.400:FF:000001">
    <property type="entry name" value="Argininosuccinate synthase"/>
    <property type="match status" value="1"/>
</dbReference>
<dbReference type="Gene3D" id="1.10.287.400">
    <property type="match status" value="1"/>
</dbReference>
<dbReference type="Gene3D" id="3.90.1260.10">
    <property type="entry name" value="Argininosuccinate synthetase, chain A, domain 2"/>
    <property type="match status" value="1"/>
</dbReference>
<dbReference type="Gene3D" id="3.40.50.620">
    <property type="entry name" value="HUPs"/>
    <property type="match status" value="1"/>
</dbReference>
<dbReference type="HAMAP" id="MF_00581">
    <property type="entry name" value="Arg_succ_synth_type2"/>
    <property type="match status" value="1"/>
</dbReference>
<dbReference type="InterPro" id="IPR023437">
    <property type="entry name" value="Arg_succ_synth_type2_subfam"/>
</dbReference>
<dbReference type="InterPro" id="IPR048268">
    <property type="entry name" value="Arginosuc_syn_C"/>
</dbReference>
<dbReference type="InterPro" id="IPR048267">
    <property type="entry name" value="Arginosuc_syn_N"/>
</dbReference>
<dbReference type="InterPro" id="IPR001518">
    <property type="entry name" value="Arginosuc_synth"/>
</dbReference>
<dbReference type="InterPro" id="IPR018223">
    <property type="entry name" value="Arginosuc_synth_CS"/>
</dbReference>
<dbReference type="InterPro" id="IPR023434">
    <property type="entry name" value="Arginosuc_synth_type_1_subfam"/>
</dbReference>
<dbReference type="InterPro" id="IPR024074">
    <property type="entry name" value="AS_cat/multimer_dom_body"/>
</dbReference>
<dbReference type="InterPro" id="IPR024073">
    <property type="entry name" value="AS_multimer_C_tail"/>
</dbReference>
<dbReference type="InterPro" id="IPR014729">
    <property type="entry name" value="Rossmann-like_a/b/a_fold"/>
</dbReference>
<dbReference type="NCBIfam" id="TIGR00032">
    <property type="entry name" value="argG"/>
    <property type="match status" value="1"/>
</dbReference>
<dbReference type="NCBIfam" id="NF003779">
    <property type="entry name" value="PRK05370.1"/>
    <property type="match status" value="1"/>
</dbReference>
<dbReference type="PANTHER" id="PTHR11587">
    <property type="entry name" value="ARGININOSUCCINATE SYNTHASE"/>
    <property type="match status" value="1"/>
</dbReference>
<dbReference type="PANTHER" id="PTHR11587:SF2">
    <property type="entry name" value="ARGININOSUCCINATE SYNTHASE"/>
    <property type="match status" value="1"/>
</dbReference>
<dbReference type="Pfam" id="PF20979">
    <property type="entry name" value="Arginosuc_syn_C"/>
    <property type="match status" value="1"/>
</dbReference>
<dbReference type="Pfam" id="PF00764">
    <property type="entry name" value="Arginosuc_synth"/>
    <property type="match status" value="1"/>
</dbReference>
<dbReference type="SUPFAM" id="SSF52402">
    <property type="entry name" value="Adenine nucleotide alpha hydrolases-like"/>
    <property type="match status" value="1"/>
</dbReference>
<dbReference type="SUPFAM" id="SSF69864">
    <property type="entry name" value="Argininosuccinate synthetase, C-terminal domain"/>
    <property type="match status" value="1"/>
</dbReference>
<dbReference type="PROSITE" id="PS00564">
    <property type="entry name" value="ARGININOSUCCIN_SYN_1"/>
    <property type="match status" value="1"/>
</dbReference>
<dbReference type="PROSITE" id="PS00565">
    <property type="entry name" value="ARGININOSUCCIN_SYN_2"/>
    <property type="match status" value="1"/>
</dbReference>
<name>ASSY_GEMAT</name>
<accession>C1A3S5</accession>
<protein>
    <recommendedName>
        <fullName evidence="1">Argininosuccinate synthase</fullName>
        <ecNumber evidence="1">6.3.4.5</ecNumber>
    </recommendedName>
    <alternativeName>
        <fullName evidence="1">Citrulline--aspartate ligase</fullName>
    </alternativeName>
</protein>